<organism>
    <name type="scientific">Bacillus cereus (strain G9842)</name>
    <dbReference type="NCBI Taxonomy" id="405531"/>
    <lineage>
        <taxon>Bacteria</taxon>
        <taxon>Bacillati</taxon>
        <taxon>Bacillota</taxon>
        <taxon>Bacilli</taxon>
        <taxon>Bacillales</taxon>
        <taxon>Bacillaceae</taxon>
        <taxon>Bacillus</taxon>
        <taxon>Bacillus cereus group</taxon>
    </lineage>
</organism>
<proteinExistence type="inferred from homology"/>
<protein>
    <recommendedName>
        <fullName evidence="1">Probable endonuclease 4</fullName>
        <ecNumber evidence="1">3.1.21.2</ecNumber>
    </recommendedName>
    <alternativeName>
        <fullName evidence="1">Endodeoxyribonuclease IV</fullName>
    </alternativeName>
    <alternativeName>
        <fullName evidence="1">Endonuclease IV</fullName>
    </alternativeName>
</protein>
<reference key="1">
    <citation type="submission" date="2008-10" db="EMBL/GenBank/DDBJ databases">
        <title>Genome sequence of Bacillus cereus G9842.</title>
        <authorList>
            <person name="Dodson R.J."/>
            <person name="Durkin A.S."/>
            <person name="Rosovitz M.J."/>
            <person name="Rasko D.A."/>
            <person name="Hoffmaster A."/>
            <person name="Ravel J."/>
            <person name="Sutton G."/>
        </authorList>
    </citation>
    <scope>NUCLEOTIDE SEQUENCE [LARGE SCALE GENOMIC DNA]</scope>
    <source>
        <strain>G9842</strain>
    </source>
</reference>
<evidence type="ECO:0000255" key="1">
    <source>
        <dbReference type="HAMAP-Rule" id="MF_00152"/>
    </source>
</evidence>
<comment type="function">
    <text evidence="1">Endonuclease IV plays a role in DNA repair. It cleaves phosphodiester bonds at apurinic or apyrimidinic (AP) sites, generating a 3'-hydroxyl group and a 5'-terminal sugar phosphate.</text>
</comment>
<comment type="catalytic activity">
    <reaction evidence="1">
        <text>Endonucleolytic cleavage to 5'-phosphooligonucleotide end-products.</text>
        <dbReference type="EC" id="3.1.21.2"/>
    </reaction>
</comment>
<comment type="cofactor">
    <cofactor evidence="1">
        <name>Zn(2+)</name>
        <dbReference type="ChEBI" id="CHEBI:29105"/>
    </cofactor>
    <text evidence="1">Binds 3 Zn(2+) ions.</text>
</comment>
<comment type="similarity">
    <text evidence="1">Belongs to the AP endonuclease 2 family.</text>
</comment>
<name>END4_BACC2</name>
<sequence>MLKIGSHVSMSGKKMLLAASEEAVSYGATTFMIYTGAPQNTRRKPIEELNIEAGRKHMELNGIEEIIVHAPYIINVGNTTKPETFQLGVDFLRMEIERTSALGVAKQIVLHPGAHVGAGADAGIQQIIKGLNEVLTPEQTVNIALETMAGKGTECGRSFEEIAKIIDGVKYNEKLSVCFDTCHTHDAGYDIVNDFDGVLNEFDKIVGIDRLQVLHINDSKNVRGAGKDRHENIGFGHIGYKALHHIVHHPQLMHVPKILETPYVGEDKKDKKPPYKLEIEMLKNGNFDEGILEKIKAQ</sequence>
<gene>
    <name evidence="1" type="primary">nfo</name>
    <name type="ordered locus">BCG9842_B0834</name>
</gene>
<dbReference type="EC" id="3.1.21.2" evidence="1"/>
<dbReference type="EMBL" id="CP001186">
    <property type="protein sequence ID" value="ACK97718.1"/>
    <property type="molecule type" value="Genomic_DNA"/>
</dbReference>
<dbReference type="RefSeq" id="WP_000912458.1">
    <property type="nucleotide sequence ID" value="NC_011772.1"/>
</dbReference>
<dbReference type="SMR" id="B7IYD6"/>
<dbReference type="KEGG" id="bcg:BCG9842_B0834"/>
<dbReference type="HOGENOM" id="CLU_025885_4_1_9"/>
<dbReference type="Proteomes" id="UP000006744">
    <property type="component" value="Chromosome"/>
</dbReference>
<dbReference type="GO" id="GO:0008833">
    <property type="term" value="F:deoxyribonuclease IV (phage-T4-induced) activity"/>
    <property type="evidence" value="ECO:0007669"/>
    <property type="project" value="UniProtKB-UniRule"/>
</dbReference>
<dbReference type="GO" id="GO:0003677">
    <property type="term" value="F:DNA binding"/>
    <property type="evidence" value="ECO:0007669"/>
    <property type="project" value="InterPro"/>
</dbReference>
<dbReference type="GO" id="GO:0003906">
    <property type="term" value="F:DNA-(apurinic or apyrimidinic site) endonuclease activity"/>
    <property type="evidence" value="ECO:0007669"/>
    <property type="project" value="TreeGrafter"/>
</dbReference>
<dbReference type="GO" id="GO:0008081">
    <property type="term" value="F:phosphoric diester hydrolase activity"/>
    <property type="evidence" value="ECO:0007669"/>
    <property type="project" value="TreeGrafter"/>
</dbReference>
<dbReference type="GO" id="GO:0008270">
    <property type="term" value="F:zinc ion binding"/>
    <property type="evidence" value="ECO:0007669"/>
    <property type="project" value="UniProtKB-UniRule"/>
</dbReference>
<dbReference type="GO" id="GO:0006284">
    <property type="term" value="P:base-excision repair"/>
    <property type="evidence" value="ECO:0007669"/>
    <property type="project" value="TreeGrafter"/>
</dbReference>
<dbReference type="CDD" id="cd00019">
    <property type="entry name" value="AP2Ec"/>
    <property type="match status" value="1"/>
</dbReference>
<dbReference type="FunFam" id="3.20.20.150:FF:000001">
    <property type="entry name" value="Probable endonuclease 4"/>
    <property type="match status" value="1"/>
</dbReference>
<dbReference type="Gene3D" id="3.20.20.150">
    <property type="entry name" value="Divalent-metal-dependent TIM barrel enzymes"/>
    <property type="match status" value="1"/>
</dbReference>
<dbReference type="HAMAP" id="MF_00152">
    <property type="entry name" value="Nfo"/>
    <property type="match status" value="1"/>
</dbReference>
<dbReference type="InterPro" id="IPR001719">
    <property type="entry name" value="AP_endonuc_2"/>
</dbReference>
<dbReference type="InterPro" id="IPR018246">
    <property type="entry name" value="AP_endonuc_F2_Zn_BS"/>
</dbReference>
<dbReference type="InterPro" id="IPR036237">
    <property type="entry name" value="Xyl_isomerase-like_sf"/>
</dbReference>
<dbReference type="InterPro" id="IPR013022">
    <property type="entry name" value="Xyl_isomerase-like_TIM-brl"/>
</dbReference>
<dbReference type="NCBIfam" id="TIGR00587">
    <property type="entry name" value="nfo"/>
    <property type="match status" value="1"/>
</dbReference>
<dbReference type="NCBIfam" id="NF002196">
    <property type="entry name" value="PRK01060.1-1"/>
    <property type="match status" value="1"/>
</dbReference>
<dbReference type="PANTHER" id="PTHR21445:SF0">
    <property type="entry name" value="APURINIC-APYRIMIDINIC ENDONUCLEASE"/>
    <property type="match status" value="1"/>
</dbReference>
<dbReference type="PANTHER" id="PTHR21445">
    <property type="entry name" value="ENDONUCLEASE IV ENDODEOXYRIBONUCLEASE IV"/>
    <property type="match status" value="1"/>
</dbReference>
<dbReference type="Pfam" id="PF01261">
    <property type="entry name" value="AP_endonuc_2"/>
    <property type="match status" value="1"/>
</dbReference>
<dbReference type="SMART" id="SM00518">
    <property type="entry name" value="AP2Ec"/>
    <property type="match status" value="1"/>
</dbReference>
<dbReference type="SUPFAM" id="SSF51658">
    <property type="entry name" value="Xylose isomerase-like"/>
    <property type="match status" value="1"/>
</dbReference>
<dbReference type="PROSITE" id="PS00729">
    <property type="entry name" value="AP_NUCLEASE_F2_1"/>
    <property type="match status" value="1"/>
</dbReference>
<dbReference type="PROSITE" id="PS00730">
    <property type="entry name" value="AP_NUCLEASE_F2_2"/>
    <property type="match status" value="1"/>
</dbReference>
<dbReference type="PROSITE" id="PS00731">
    <property type="entry name" value="AP_NUCLEASE_F2_3"/>
    <property type="match status" value="1"/>
</dbReference>
<dbReference type="PROSITE" id="PS51432">
    <property type="entry name" value="AP_NUCLEASE_F2_4"/>
    <property type="match status" value="1"/>
</dbReference>
<keyword id="KW-0227">DNA damage</keyword>
<keyword id="KW-0234">DNA repair</keyword>
<keyword id="KW-0255">Endonuclease</keyword>
<keyword id="KW-0378">Hydrolase</keyword>
<keyword id="KW-0479">Metal-binding</keyword>
<keyword id="KW-0540">Nuclease</keyword>
<keyword id="KW-0862">Zinc</keyword>
<accession>B7IYD6</accession>
<feature type="chain" id="PRO_1000118090" description="Probable endonuclease 4">
    <location>
        <begin position="1"/>
        <end position="298"/>
    </location>
</feature>
<feature type="binding site" evidence="1">
    <location>
        <position position="69"/>
    </location>
    <ligand>
        <name>Zn(2+)</name>
        <dbReference type="ChEBI" id="CHEBI:29105"/>
        <label>1</label>
    </ligand>
</feature>
<feature type="binding site" evidence="1">
    <location>
        <position position="111"/>
    </location>
    <ligand>
        <name>Zn(2+)</name>
        <dbReference type="ChEBI" id="CHEBI:29105"/>
        <label>1</label>
    </ligand>
</feature>
<feature type="binding site" evidence="1">
    <location>
        <position position="146"/>
    </location>
    <ligand>
        <name>Zn(2+)</name>
        <dbReference type="ChEBI" id="CHEBI:29105"/>
        <label>1</label>
    </ligand>
</feature>
<feature type="binding site" evidence="1">
    <location>
        <position position="146"/>
    </location>
    <ligand>
        <name>Zn(2+)</name>
        <dbReference type="ChEBI" id="CHEBI:29105"/>
        <label>2</label>
    </ligand>
</feature>
<feature type="binding site" evidence="1">
    <location>
        <position position="180"/>
    </location>
    <ligand>
        <name>Zn(2+)</name>
        <dbReference type="ChEBI" id="CHEBI:29105"/>
        <label>2</label>
    </ligand>
</feature>
<feature type="binding site" evidence="1">
    <location>
        <position position="183"/>
    </location>
    <ligand>
        <name>Zn(2+)</name>
        <dbReference type="ChEBI" id="CHEBI:29105"/>
        <label>3</label>
    </ligand>
</feature>
<feature type="binding site" evidence="1">
    <location>
        <position position="215"/>
    </location>
    <ligand>
        <name>Zn(2+)</name>
        <dbReference type="ChEBI" id="CHEBI:29105"/>
        <label>2</label>
    </ligand>
</feature>
<feature type="binding site" evidence="1">
    <location>
        <position position="228"/>
    </location>
    <ligand>
        <name>Zn(2+)</name>
        <dbReference type="ChEBI" id="CHEBI:29105"/>
        <label>3</label>
    </ligand>
</feature>
<feature type="binding site" evidence="1">
    <location>
        <position position="230"/>
    </location>
    <ligand>
        <name>Zn(2+)</name>
        <dbReference type="ChEBI" id="CHEBI:29105"/>
        <label>3</label>
    </ligand>
</feature>
<feature type="binding site" evidence="1">
    <location>
        <position position="260"/>
    </location>
    <ligand>
        <name>Zn(2+)</name>
        <dbReference type="ChEBI" id="CHEBI:29105"/>
        <label>2</label>
    </ligand>
</feature>